<evidence type="ECO:0000255" key="1">
    <source>
        <dbReference type="HAMAP-Rule" id="MF_00524"/>
    </source>
</evidence>
<gene>
    <name evidence="1" type="primary">glk</name>
    <name type="ordered locus">PA14_22930</name>
</gene>
<accession>Q02PZ9</accession>
<comment type="catalytic activity">
    <reaction evidence="1">
        <text>D-glucose + ATP = D-glucose 6-phosphate + ADP + H(+)</text>
        <dbReference type="Rhea" id="RHEA:17825"/>
        <dbReference type="ChEBI" id="CHEBI:4167"/>
        <dbReference type="ChEBI" id="CHEBI:15378"/>
        <dbReference type="ChEBI" id="CHEBI:30616"/>
        <dbReference type="ChEBI" id="CHEBI:61548"/>
        <dbReference type="ChEBI" id="CHEBI:456216"/>
        <dbReference type="EC" id="2.7.1.2"/>
    </reaction>
</comment>
<comment type="subcellular location">
    <subcellularLocation>
        <location evidence="1">Cytoplasm</location>
    </subcellularLocation>
</comment>
<comment type="similarity">
    <text evidence="1">Belongs to the bacterial glucokinase family.</text>
</comment>
<feature type="chain" id="PRO_1000050974" description="Glucokinase">
    <location>
        <begin position="1"/>
        <end position="331"/>
    </location>
</feature>
<feature type="binding site" evidence="1">
    <location>
        <begin position="16"/>
        <end position="21"/>
    </location>
    <ligand>
        <name>ATP</name>
        <dbReference type="ChEBI" id="CHEBI:30616"/>
    </ligand>
</feature>
<reference key="1">
    <citation type="journal article" date="2006" name="Genome Biol.">
        <title>Genomic analysis reveals that Pseudomonas aeruginosa virulence is combinatorial.</title>
        <authorList>
            <person name="Lee D.G."/>
            <person name="Urbach J.M."/>
            <person name="Wu G."/>
            <person name="Liberati N.T."/>
            <person name="Feinbaum R.L."/>
            <person name="Miyata S."/>
            <person name="Diggins L.T."/>
            <person name="He J."/>
            <person name="Saucier M."/>
            <person name="Deziel E."/>
            <person name="Friedman L."/>
            <person name="Li L."/>
            <person name="Grills G."/>
            <person name="Montgomery K."/>
            <person name="Kucherlapati R."/>
            <person name="Rahme L.G."/>
            <person name="Ausubel F.M."/>
        </authorList>
    </citation>
    <scope>NUCLEOTIDE SEQUENCE [LARGE SCALE GENOMIC DNA]</scope>
    <source>
        <strain>UCBPP-PA14</strain>
    </source>
</reference>
<sequence>MNNDNKRSAGGLGLVGDIGGTNARFALWRGQRLESIEVLACADYPRPELAVRDYLARIGESVANIDSVCLACAGPVGAADFRFTNNHWVINRAAFREELGLDHLLLVNDFSTMAWAASRLGADELVQVRAGSAQADRARLIIGPGTGLGVGSLLPLGGGRWEVLPCEGGHVDLPVTSPRDFALWQGLQARYGHVSAERALSGNGLLALYEISCALDGVAVRASSAAEVGALAMAGDAQADAVLEHFFLWLARVAGNAVLTVGALGGVYITGGIVPRFLERFIASGFAEAFARRGKTSGAYLQDVPVWVMTAEHPGLLGAGVALQQALDAEG</sequence>
<dbReference type="EC" id="2.7.1.2" evidence="1"/>
<dbReference type="EMBL" id="CP000438">
    <property type="protein sequence ID" value="ABJ12418.1"/>
    <property type="molecule type" value="Genomic_DNA"/>
</dbReference>
<dbReference type="RefSeq" id="WP_003091477.1">
    <property type="nucleotide sequence ID" value="NZ_CP034244.1"/>
</dbReference>
<dbReference type="SMR" id="Q02PZ9"/>
<dbReference type="KEGG" id="pau:PA14_22930"/>
<dbReference type="PseudoCAP" id="PA14_22930"/>
<dbReference type="HOGENOM" id="CLU_042582_1_0_6"/>
<dbReference type="BioCyc" id="PAER208963:G1G74-1909-MONOMER"/>
<dbReference type="Proteomes" id="UP000000653">
    <property type="component" value="Chromosome"/>
</dbReference>
<dbReference type="GO" id="GO:0005829">
    <property type="term" value="C:cytosol"/>
    <property type="evidence" value="ECO:0007669"/>
    <property type="project" value="TreeGrafter"/>
</dbReference>
<dbReference type="GO" id="GO:0005524">
    <property type="term" value="F:ATP binding"/>
    <property type="evidence" value="ECO:0007669"/>
    <property type="project" value="UniProtKB-UniRule"/>
</dbReference>
<dbReference type="GO" id="GO:0005536">
    <property type="term" value="F:D-glucose binding"/>
    <property type="evidence" value="ECO:0007669"/>
    <property type="project" value="InterPro"/>
</dbReference>
<dbReference type="GO" id="GO:0004340">
    <property type="term" value="F:glucokinase activity"/>
    <property type="evidence" value="ECO:0007669"/>
    <property type="project" value="UniProtKB-UniRule"/>
</dbReference>
<dbReference type="GO" id="GO:0006096">
    <property type="term" value="P:glycolytic process"/>
    <property type="evidence" value="ECO:0007669"/>
    <property type="project" value="UniProtKB-UniRule"/>
</dbReference>
<dbReference type="CDD" id="cd24008">
    <property type="entry name" value="ASKHA_NBD_GLK"/>
    <property type="match status" value="1"/>
</dbReference>
<dbReference type="FunFam" id="3.40.367.20:FF:000013">
    <property type="entry name" value="Glucokinase"/>
    <property type="match status" value="1"/>
</dbReference>
<dbReference type="Gene3D" id="3.30.420.40">
    <property type="match status" value="1"/>
</dbReference>
<dbReference type="Gene3D" id="3.40.367.20">
    <property type="match status" value="1"/>
</dbReference>
<dbReference type="HAMAP" id="MF_00524">
    <property type="entry name" value="Glucokinase"/>
    <property type="match status" value="1"/>
</dbReference>
<dbReference type="InterPro" id="IPR043129">
    <property type="entry name" value="ATPase_NBD"/>
</dbReference>
<dbReference type="InterPro" id="IPR050201">
    <property type="entry name" value="Bacterial_glucokinase"/>
</dbReference>
<dbReference type="InterPro" id="IPR003836">
    <property type="entry name" value="Glucokinase"/>
</dbReference>
<dbReference type="NCBIfam" id="TIGR00749">
    <property type="entry name" value="glk"/>
    <property type="match status" value="1"/>
</dbReference>
<dbReference type="NCBIfam" id="NF001415">
    <property type="entry name" value="PRK00292.1-2"/>
    <property type="match status" value="1"/>
</dbReference>
<dbReference type="PANTHER" id="PTHR47690">
    <property type="entry name" value="GLUCOKINASE"/>
    <property type="match status" value="1"/>
</dbReference>
<dbReference type="PANTHER" id="PTHR47690:SF1">
    <property type="entry name" value="GLUCOKINASE"/>
    <property type="match status" value="1"/>
</dbReference>
<dbReference type="Pfam" id="PF02685">
    <property type="entry name" value="Glucokinase"/>
    <property type="match status" value="1"/>
</dbReference>
<dbReference type="SUPFAM" id="SSF53067">
    <property type="entry name" value="Actin-like ATPase domain"/>
    <property type="match status" value="1"/>
</dbReference>
<proteinExistence type="inferred from homology"/>
<name>GLK_PSEAB</name>
<organism>
    <name type="scientific">Pseudomonas aeruginosa (strain UCBPP-PA14)</name>
    <dbReference type="NCBI Taxonomy" id="208963"/>
    <lineage>
        <taxon>Bacteria</taxon>
        <taxon>Pseudomonadati</taxon>
        <taxon>Pseudomonadota</taxon>
        <taxon>Gammaproteobacteria</taxon>
        <taxon>Pseudomonadales</taxon>
        <taxon>Pseudomonadaceae</taxon>
        <taxon>Pseudomonas</taxon>
    </lineage>
</organism>
<protein>
    <recommendedName>
        <fullName evidence="1">Glucokinase</fullName>
        <ecNumber evidence="1">2.7.1.2</ecNumber>
    </recommendedName>
    <alternativeName>
        <fullName evidence="1">Glucose kinase</fullName>
    </alternativeName>
</protein>
<keyword id="KW-0067">ATP-binding</keyword>
<keyword id="KW-0963">Cytoplasm</keyword>
<keyword id="KW-0324">Glycolysis</keyword>
<keyword id="KW-0418">Kinase</keyword>
<keyword id="KW-0547">Nucleotide-binding</keyword>
<keyword id="KW-0808">Transferase</keyword>